<gene>
    <name evidence="1" type="primary">nuoB</name>
    <name type="ordered locus">Tfu_2694</name>
</gene>
<feature type="chain" id="PRO_0000376394" description="NADH-quinone oxidoreductase subunit B">
    <location>
        <begin position="1"/>
        <end position="185"/>
    </location>
</feature>
<feature type="binding site" evidence="1">
    <location>
        <position position="37"/>
    </location>
    <ligand>
        <name>[4Fe-4S] cluster</name>
        <dbReference type="ChEBI" id="CHEBI:49883"/>
    </ligand>
</feature>
<feature type="binding site" evidence="1">
    <location>
        <position position="38"/>
    </location>
    <ligand>
        <name>[4Fe-4S] cluster</name>
        <dbReference type="ChEBI" id="CHEBI:49883"/>
    </ligand>
</feature>
<feature type="binding site" evidence="1">
    <location>
        <position position="103"/>
    </location>
    <ligand>
        <name>[4Fe-4S] cluster</name>
        <dbReference type="ChEBI" id="CHEBI:49883"/>
    </ligand>
</feature>
<feature type="binding site" evidence="1">
    <location>
        <position position="132"/>
    </location>
    <ligand>
        <name>[4Fe-4S] cluster</name>
        <dbReference type="ChEBI" id="CHEBI:49883"/>
    </ligand>
</feature>
<evidence type="ECO:0000255" key="1">
    <source>
        <dbReference type="HAMAP-Rule" id="MF_01356"/>
    </source>
</evidence>
<keyword id="KW-0004">4Fe-4S</keyword>
<keyword id="KW-1003">Cell membrane</keyword>
<keyword id="KW-0408">Iron</keyword>
<keyword id="KW-0411">Iron-sulfur</keyword>
<keyword id="KW-0472">Membrane</keyword>
<keyword id="KW-0479">Metal-binding</keyword>
<keyword id="KW-0520">NAD</keyword>
<keyword id="KW-0874">Quinone</keyword>
<keyword id="KW-1278">Translocase</keyword>
<keyword id="KW-0813">Transport</keyword>
<reference key="1">
    <citation type="journal article" date="2007" name="J. Bacteriol.">
        <title>Genome sequence and analysis of the soil cellulolytic actinomycete Thermobifida fusca YX.</title>
        <authorList>
            <person name="Lykidis A."/>
            <person name="Mavromatis K."/>
            <person name="Ivanova N."/>
            <person name="Anderson I."/>
            <person name="Land M."/>
            <person name="DiBartolo G."/>
            <person name="Martinez M."/>
            <person name="Lapidus A."/>
            <person name="Lucas S."/>
            <person name="Copeland A."/>
            <person name="Richardson P."/>
            <person name="Wilson D.B."/>
            <person name="Kyrpides N."/>
        </authorList>
    </citation>
    <scope>NUCLEOTIDE SEQUENCE [LARGE SCALE GENOMIC DNA]</scope>
    <source>
        <strain>YX</strain>
    </source>
</reference>
<comment type="function">
    <text evidence="1">NDH-1 shuttles electrons from NADH, via FMN and iron-sulfur (Fe-S) centers, to quinones in the respiratory chain. The immediate electron acceptor for the enzyme in this species is believed to be a menaquinone. Couples the redox reaction to proton translocation (for every two electrons transferred, four hydrogen ions are translocated across the cytoplasmic membrane), and thus conserves the redox energy in a proton gradient.</text>
</comment>
<comment type="catalytic activity">
    <reaction evidence="1">
        <text>a quinone + NADH + 5 H(+)(in) = a quinol + NAD(+) + 4 H(+)(out)</text>
        <dbReference type="Rhea" id="RHEA:57888"/>
        <dbReference type="ChEBI" id="CHEBI:15378"/>
        <dbReference type="ChEBI" id="CHEBI:24646"/>
        <dbReference type="ChEBI" id="CHEBI:57540"/>
        <dbReference type="ChEBI" id="CHEBI:57945"/>
        <dbReference type="ChEBI" id="CHEBI:132124"/>
    </reaction>
</comment>
<comment type="cofactor">
    <cofactor evidence="1">
        <name>[4Fe-4S] cluster</name>
        <dbReference type="ChEBI" id="CHEBI:49883"/>
    </cofactor>
    <text evidence="1">Binds 1 [4Fe-4S] cluster.</text>
</comment>
<comment type="subunit">
    <text evidence="1">NDH-1 is composed of 14 different subunits. Subunits NuoB, C, D, E, F, and G constitute the peripheral sector of the complex.</text>
</comment>
<comment type="subcellular location">
    <subcellularLocation>
        <location evidence="1">Cell membrane</location>
        <topology evidence="1">Peripheral membrane protein</topology>
        <orientation evidence="1">Cytoplasmic side</orientation>
    </subcellularLocation>
</comment>
<comment type="similarity">
    <text evidence="1">Belongs to the complex I 20 kDa subunit family.</text>
</comment>
<name>NUOB_THEFY</name>
<organism>
    <name type="scientific">Thermobifida fusca (strain YX)</name>
    <dbReference type="NCBI Taxonomy" id="269800"/>
    <lineage>
        <taxon>Bacteria</taxon>
        <taxon>Bacillati</taxon>
        <taxon>Actinomycetota</taxon>
        <taxon>Actinomycetes</taxon>
        <taxon>Streptosporangiales</taxon>
        <taxon>Nocardiopsidaceae</taxon>
        <taxon>Thermobifida</taxon>
    </lineage>
</organism>
<proteinExistence type="inferred from homology"/>
<protein>
    <recommendedName>
        <fullName evidence="1">NADH-quinone oxidoreductase subunit B</fullName>
        <ecNumber evidence="1">7.1.1.-</ecNumber>
    </recommendedName>
    <alternativeName>
        <fullName evidence="1">NADH dehydrogenase I subunit B</fullName>
    </alternativeName>
    <alternativeName>
        <fullName evidence="1">NDH-1 subunit B</fullName>
    </alternativeName>
</protein>
<accession>Q47LE5</accession>
<sequence>MGLEEKLPSGVLLTTVEQIVGFVRKTSMWPATFGLACCAIEMMAAGGPRFDIARFGMERFSATPRQADLMIVAGRVSQKMAPVLRTIYDQMAEPKWVIAMGVCASSGGMFNNYAIVQGVDHIVPVDIYLPGCPPRPEMLLDAILKLHDKVQNTKLGVHREREIEELEQRRLRALPLIQQTEEATR</sequence>
<dbReference type="EC" id="7.1.1.-" evidence="1"/>
<dbReference type="EMBL" id="CP000088">
    <property type="protein sequence ID" value="AAZ56727.1"/>
    <property type="molecule type" value="Genomic_DNA"/>
</dbReference>
<dbReference type="RefSeq" id="WP_011293117.1">
    <property type="nucleotide sequence ID" value="NC_007333.1"/>
</dbReference>
<dbReference type="SMR" id="Q47LE5"/>
<dbReference type="STRING" id="269800.Tfu_2694"/>
<dbReference type="KEGG" id="tfu:Tfu_2694"/>
<dbReference type="eggNOG" id="COG0377">
    <property type="taxonomic scope" value="Bacteria"/>
</dbReference>
<dbReference type="HOGENOM" id="CLU_055737_7_3_11"/>
<dbReference type="OrthoDB" id="9786737at2"/>
<dbReference type="GO" id="GO:0005886">
    <property type="term" value="C:plasma membrane"/>
    <property type="evidence" value="ECO:0007669"/>
    <property type="project" value="UniProtKB-SubCell"/>
</dbReference>
<dbReference type="GO" id="GO:0045271">
    <property type="term" value="C:respiratory chain complex I"/>
    <property type="evidence" value="ECO:0007669"/>
    <property type="project" value="TreeGrafter"/>
</dbReference>
<dbReference type="GO" id="GO:0051539">
    <property type="term" value="F:4 iron, 4 sulfur cluster binding"/>
    <property type="evidence" value="ECO:0007669"/>
    <property type="project" value="UniProtKB-KW"/>
</dbReference>
<dbReference type="GO" id="GO:0005506">
    <property type="term" value="F:iron ion binding"/>
    <property type="evidence" value="ECO:0007669"/>
    <property type="project" value="UniProtKB-UniRule"/>
</dbReference>
<dbReference type="GO" id="GO:0008137">
    <property type="term" value="F:NADH dehydrogenase (ubiquinone) activity"/>
    <property type="evidence" value="ECO:0007669"/>
    <property type="project" value="InterPro"/>
</dbReference>
<dbReference type="GO" id="GO:0050136">
    <property type="term" value="F:NADH:ubiquinone reductase (non-electrogenic) activity"/>
    <property type="evidence" value="ECO:0007669"/>
    <property type="project" value="UniProtKB-UniRule"/>
</dbReference>
<dbReference type="GO" id="GO:0048038">
    <property type="term" value="F:quinone binding"/>
    <property type="evidence" value="ECO:0007669"/>
    <property type="project" value="UniProtKB-KW"/>
</dbReference>
<dbReference type="GO" id="GO:0009060">
    <property type="term" value="P:aerobic respiration"/>
    <property type="evidence" value="ECO:0007669"/>
    <property type="project" value="TreeGrafter"/>
</dbReference>
<dbReference type="GO" id="GO:0015990">
    <property type="term" value="P:electron transport coupled proton transport"/>
    <property type="evidence" value="ECO:0007669"/>
    <property type="project" value="TreeGrafter"/>
</dbReference>
<dbReference type="FunFam" id="3.40.50.12280:FF:000004">
    <property type="entry name" value="NADH-quinone oxidoreductase subunit B"/>
    <property type="match status" value="1"/>
</dbReference>
<dbReference type="Gene3D" id="3.40.50.12280">
    <property type="match status" value="1"/>
</dbReference>
<dbReference type="HAMAP" id="MF_01356">
    <property type="entry name" value="NDH1_NuoB"/>
    <property type="match status" value="1"/>
</dbReference>
<dbReference type="InterPro" id="IPR006137">
    <property type="entry name" value="NADH_UbQ_OxRdtase-like_20kDa"/>
</dbReference>
<dbReference type="InterPro" id="IPR006138">
    <property type="entry name" value="NADH_UQ_OxRdtase_20Kd_su"/>
</dbReference>
<dbReference type="NCBIfam" id="TIGR01957">
    <property type="entry name" value="nuoB_fam"/>
    <property type="match status" value="1"/>
</dbReference>
<dbReference type="NCBIfam" id="NF005012">
    <property type="entry name" value="PRK06411.1"/>
    <property type="match status" value="1"/>
</dbReference>
<dbReference type="PANTHER" id="PTHR11995">
    <property type="entry name" value="NADH DEHYDROGENASE"/>
    <property type="match status" value="1"/>
</dbReference>
<dbReference type="PANTHER" id="PTHR11995:SF14">
    <property type="entry name" value="NADH DEHYDROGENASE [UBIQUINONE] IRON-SULFUR PROTEIN 7, MITOCHONDRIAL"/>
    <property type="match status" value="1"/>
</dbReference>
<dbReference type="Pfam" id="PF01058">
    <property type="entry name" value="Oxidored_q6"/>
    <property type="match status" value="1"/>
</dbReference>
<dbReference type="SUPFAM" id="SSF56770">
    <property type="entry name" value="HydA/Nqo6-like"/>
    <property type="match status" value="1"/>
</dbReference>
<dbReference type="PROSITE" id="PS01150">
    <property type="entry name" value="COMPLEX1_20K"/>
    <property type="match status" value="1"/>
</dbReference>